<evidence type="ECO:0000255" key="1">
    <source>
        <dbReference type="HAMAP-Rule" id="MF_00254"/>
    </source>
</evidence>
<accession>A8G5W1</accession>
<organism>
    <name type="scientific">Prochlorococcus marinus (strain MIT 9215)</name>
    <dbReference type="NCBI Taxonomy" id="93060"/>
    <lineage>
        <taxon>Bacteria</taxon>
        <taxon>Bacillati</taxon>
        <taxon>Cyanobacteriota</taxon>
        <taxon>Cyanophyceae</taxon>
        <taxon>Synechococcales</taxon>
        <taxon>Prochlorococcaceae</taxon>
        <taxon>Prochlorococcus</taxon>
    </lineage>
</organism>
<comment type="catalytic activity">
    <reaction evidence="1">
        <text>tRNA(Gly) + glycine + ATP = glycyl-tRNA(Gly) + AMP + diphosphate</text>
        <dbReference type="Rhea" id="RHEA:16013"/>
        <dbReference type="Rhea" id="RHEA-COMP:9664"/>
        <dbReference type="Rhea" id="RHEA-COMP:9683"/>
        <dbReference type="ChEBI" id="CHEBI:30616"/>
        <dbReference type="ChEBI" id="CHEBI:33019"/>
        <dbReference type="ChEBI" id="CHEBI:57305"/>
        <dbReference type="ChEBI" id="CHEBI:78442"/>
        <dbReference type="ChEBI" id="CHEBI:78522"/>
        <dbReference type="ChEBI" id="CHEBI:456215"/>
        <dbReference type="EC" id="6.1.1.14"/>
    </reaction>
</comment>
<comment type="subunit">
    <text evidence="1">Tetramer of two alpha and two beta subunits.</text>
</comment>
<comment type="subcellular location">
    <subcellularLocation>
        <location evidence="1">Cytoplasm</location>
    </subcellularLocation>
</comment>
<comment type="similarity">
    <text evidence="1">Belongs to the class-II aminoacyl-tRNA synthetase family.</text>
</comment>
<reference key="1">
    <citation type="journal article" date="2007" name="PLoS Genet.">
        <title>Patterns and implications of gene gain and loss in the evolution of Prochlorococcus.</title>
        <authorList>
            <person name="Kettler G.C."/>
            <person name="Martiny A.C."/>
            <person name="Huang K."/>
            <person name="Zucker J."/>
            <person name="Coleman M.L."/>
            <person name="Rodrigue S."/>
            <person name="Chen F."/>
            <person name="Lapidus A."/>
            <person name="Ferriera S."/>
            <person name="Johnson J."/>
            <person name="Steglich C."/>
            <person name="Church G.M."/>
            <person name="Richardson P."/>
            <person name="Chisholm S.W."/>
        </authorList>
    </citation>
    <scope>NUCLEOTIDE SEQUENCE [LARGE SCALE GENOMIC DNA]</scope>
    <source>
        <strain>MIT 9215</strain>
    </source>
</reference>
<gene>
    <name evidence="1" type="primary">glyQ</name>
    <name type="ordered locus">P9215_13771</name>
</gene>
<feature type="chain" id="PRO_1000059055" description="Glycine--tRNA ligase alpha subunit">
    <location>
        <begin position="1"/>
        <end position="295"/>
    </location>
</feature>
<proteinExistence type="inferred from homology"/>
<dbReference type="EC" id="6.1.1.14" evidence="1"/>
<dbReference type="EMBL" id="CP000825">
    <property type="protein sequence ID" value="ABV50992.1"/>
    <property type="molecule type" value="Genomic_DNA"/>
</dbReference>
<dbReference type="RefSeq" id="WP_012008046.1">
    <property type="nucleotide sequence ID" value="NC_009840.1"/>
</dbReference>
<dbReference type="SMR" id="A8G5W1"/>
<dbReference type="STRING" id="93060.P9215_13771"/>
<dbReference type="KEGG" id="pmh:P9215_13771"/>
<dbReference type="eggNOG" id="COG0752">
    <property type="taxonomic scope" value="Bacteria"/>
</dbReference>
<dbReference type="HOGENOM" id="CLU_057066_1_0_3"/>
<dbReference type="OrthoDB" id="9802183at2"/>
<dbReference type="Proteomes" id="UP000002014">
    <property type="component" value="Chromosome"/>
</dbReference>
<dbReference type="GO" id="GO:0005829">
    <property type="term" value="C:cytosol"/>
    <property type="evidence" value="ECO:0007669"/>
    <property type="project" value="TreeGrafter"/>
</dbReference>
<dbReference type="GO" id="GO:0005524">
    <property type="term" value="F:ATP binding"/>
    <property type="evidence" value="ECO:0007669"/>
    <property type="project" value="UniProtKB-UniRule"/>
</dbReference>
<dbReference type="GO" id="GO:0004820">
    <property type="term" value="F:glycine-tRNA ligase activity"/>
    <property type="evidence" value="ECO:0007669"/>
    <property type="project" value="UniProtKB-UniRule"/>
</dbReference>
<dbReference type="GO" id="GO:0006426">
    <property type="term" value="P:glycyl-tRNA aminoacylation"/>
    <property type="evidence" value="ECO:0007669"/>
    <property type="project" value="UniProtKB-UniRule"/>
</dbReference>
<dbReference type="CDD" id="cd00733">
    <property type="entry name" value="GlyRS_alpha_core"/>
    <property type="match status" value="1"/>
</dbReference>
<dbReference type="FunFam" id="3.30.930.10:FF:000006">
    <property type="entry name" value="Glycine--tRNA ligase alpha subunit"/>
    <property type="match status" value="1"/>
</dbReference>
<dbReference type="Gene3D" id="3.30.930.10">
    <property type="entry name" value="Bira Bifunctional Protein, Domain 2"/>
    <property type="match status" value="1"/>
</dbReference>
<dbReference type="Gene3D" id="1.20.58.180">
    <property type="entry name" value="Class II aaRS and biotin synthetases, domain 2"/>
    <property type="match status" value="1"/>
</dbReference>
<dbReference type="HAMAP" id="MF_00254">
    <property type="entry name" value="Gly_tRNA_synth_alpha"/>
    <property type="match status" value="1"/>
</dbReference>
<dbReference type="InterPro" id="IPR045864">
    <property type="entry name" value="aa-tRNA-synth_II/BPL/LPL"/>
</dbReference>
<dbReference type="InterPro" id="IPR006194">
    <property type="entry name" value="Gly-tRNA-synth_heterodimer"/>
</dbReference>
<dbReference type="InterPro" id="IPR002310">
    <property type="entry name" value="Gly-tRNA_ligase_asu"/>
</dbReference>
<dbReference type="NCBIfam" id="TIGR00388">
    <property type="entry name" value="glyQ"/>
    <property type="match status" value="1"/>
</dbReference>
<dbReference type="NCBIfam" id="NF006827">
    <property type="entry name" value="PRK09348.1"/>
    <property type="match status" value="1"/>
</dbReference>
<dbReference type="PANTHER" id="PTHR30075:SF2">
    <property type="entry name" value="GLYCINE--TRNA LIGASE, CHLOROPLASTIC_MITOCHONDRIAL 2"/>
    <property type="match status" value="1"/>
</dbReference>
<dbReference type="PANTHER" id="PTHR30075">
    <property type="entry name" value="GLYCYL-TRNA SYNTHETASE"/>
    <property type="match status" value="1"/>
</dbReference>
<dbReference type="Pfam" id="PF02091">
    <property type="entry name" value="tRNA-synt_2e"/>
    <property type="match status" value="1"/>
</dbReference>
<dbReference type="PRINTS" id="PR01044">
    <property type="entry name" value="TRNASYNTHGA"/>
</dbReference>
<dbReference type="SUPFAM" id="SSF55681">
    <property type="entry name" value="Class II aaRS and biotin synthetases"/>
    <property type="match status" value="1"/>
</dbReference>
<dbReference type="PROSITE" id="PS50861">
    <property type="entry name" value="AA_TRNA_LIGASE_II_GLYAB"/>
    <property type="match status" value="1"/>
</dbReference>
<protein>
    <recommendedName>
        <fullName evidence="1">Glycine--tRNA ligase alpha subunit</fullName>
        <ecNumber evidence="1">6.1.1.14</ecNumber>
    </recommendedName>
    <alternativeName>
        <fullName evidence="1">Glycyl-tRNA synthetase alpha subunit</fullName>
        <shortName evidence="1">GlyRS</shortName>
    </alternativeName>
</protein>
<sequence length="295" mass="34498">MFFQDIIKNLNNFWSEEGCLIMQPYDTEKGAGTMNPHTFLRAIGPEPWSVAYTEPCRRPADGRFGDNPNRAQHYFQYQVIIKPSPEGIQEKYLTSLDSLGINPRNHDIRFVEDNWESPTLGAWGVGWEVWLDGMEVTQFTYFQQCGGIDCKPIPIEITYGLERIAMFLQDKESIWDLNWNRDLKYSDIWLQFEKSQCSYNFKESSADNLRKLFEIYQSEAISLIEKKLTYPALDFVLKCSHNFNLLDARGVISVTDRAQYIEKIRKLAREVASSWIDERESLHFPLMKNSKEIFL</sequence>
<name>SYGA_PROM2</name>
<keyword id="KW-0030">Aminoacyl-tRNA synthetase</keyword>
<keyword id="KW-0067">ATP-binding</keyword>
<keyword id="KW-0963">Cytoplasm</keyword>
<keyword id="KW-0436">Ligase</keyword>
<keyword id="KW-0547">Nucleotide-binding</keyword>
<keyword id="KW-0648">Protein biosynthesis</keyword>